<accession>Q52078</accession>
<feature type="initiator methionine" description="Removed" evidence="4">
    <location>
        <position position="1"/>
    </location>
</feature>
<feature type="chain" id="PRO_0000413582" description="Formaldehyde dismutase" evidence="4">
    <location>
        <begin position="2"/>
        <end position="399"/>
    </location>
</feature>
<feature type="binding site" evidence="5">
    <location>
        <position position="46"/>
    </location>
    <ligand>
        <name>Zn(2+)</name>
        <dbReference type="ChEBI" id="CHEBI:29105"/>
        <label>1</label>
        <note>catalytic</note>
    </ligand>
</feature>
<feature type="binding site" evidence="5">
    <location>
        <begin position="47"/>
        <end position="51"/>
    </location>
    <ligand>
        <name>NAD(+)</name>
        <dbReference type="ChEBI" id="CHEBI:57540"/>
    </ligand>
</feature>
<feature type="binding site" evidence="5">
    <location>
        <position position="67"/>
    </location>
    <ligand>
        <name>Zn(2+)</name>
        <dbReference type="ChEBI" id="CHEBI:29105"/>
        <label>1</label>
        <note>catalytic</note>
    </ligand>
</feature>
<feature type="binding site" evidence="5">
    <location>
        <position position="97"/>
    </location>
    <ligand>
        <name>Zn(2+)</name>
        <dbReference type="ChEBI" id="CHEBI:29105"/>
        <label>2</label>
    </ligand>
</feature>
<feature type="binding site" evidence="5">
    <location>
        <position position="100"/>
    </location>
    <ligand>
        <name>Zn(2+)</name>
        <dbReference type="ChEBI" id="CHEBI:29105"/>
        <label>2</label>
    </ligand>
</feature>
<feature type="binding site" evidence="5">
    <location>
        <position position="103"/>
    </location>
    <ligand>
        <name>Zn(2+)</name>
        <dbReference type="ChEBI" id="CHEBI:29105"/>
        <label>2</label>
    </ligand>
</feature>
<feature type="binding site" evidence="5">
    <location>
        <position position="111"/>
    </location>
    <ligand>
        <name>Zn(2+)</name>
        <dbReference type="ChEBI" id="CHEBI:29105"/>
        <label>2</label>
    </ligand>
</feature>
<feature type="binding site" evidence="5">
    <location>
        <position position="170"/>
    </location>
    <ligand>
        <name>Zn(2+)</name>
        <dbReference type="ChEBI" id="CHEBI:29105"/>
        <label>1</label>
        <note>catalytic</note>
    </ligand>
</feature>
<feature type="binding site" evidence="5">
    <location>
        <position position="174"/>
    </location>
    <ligand>
        <name>NAD(+)</name>
        <dbReference type="ChEBI" id="CHEBI:57540"/>
    </ligand>
</feature>
<feature type="binding site" evidence="1">
    <location>
        <position position="177"/>
    </location>
    <ligand>
        <name>Zn(2+)</name>
        <dbReference type="ChEBI" id="CHEBI:29105"/>
        <label>1</label>
        <note>catalytic</note>
    </ligand>
</feature>
<feature type="binding site" evidence="5">
    <location>
        <begin position="197"/>
        <end position="198"/>
    </location>
    <ligand>
        <name>NAD(+)</name>
        <dbReference type="ChEBI" id="CHEBI:57540"/>
    </ligand>
</feature>
<feature type="binding site" evidence="5">
    <location>
        <begin position="218"/>
        <end position="219"/>
    </location>
    <ligand>
        <name>NAD(+)</name>
        <dbReference type="ChEBI" id="CHEBI:57540"/>
    </ligand>
</feature>
<feature type="binding site" evidence="5">
    <location>
        <position position="223"/>
    </location>
    <ligand>
        <name>NAD(+)</name>
        <dbReference type="ChEBI" id="CHEBI:57540"/>
    </ligand>
</feature>
<feature type="binding site" evidence="5">
    <location>
        <position position="263"/>
    </location>
    <ligand>
        <name>NAD(+)</name>
        <dbReference type="ChEBI" id="CHEBI:57540"/>
    </ligand>
</feature>
<feature type="binding site" evidence="5">
    <location>
        <position position="268"/>
    </location>
    <ligand>
        <name>NAD(+)</name>
        <dbReference type="ChEBI" id="CHEBI:57540"/>
    </ligand>
</feature>
<feature type="binding site" evidence="5">
    <location>
        <begin position="299"/>
        <end position="301"/>
    </location>
    <ligand>
        <name>NAD(+)</name>
        <dbReference type="ChEBI" id="CHEBI:57540"/>
    </ligand>
</feature>
<feature type="binding site" evidence="5">
    <location>
        <position position="299"/>
    </location>
    <ligand>
        <name>NAD(+)</name>
        <dbReference type="ChEBI" id="CHEBI:57540"/>
    </ligand>
</feature>
<feature type="binding site" evidence="5">
    <location>
        <begin position="336"/>
        <end position="338"/>
    </location>
    <ligand>
        <name>NAD(+)</name>
        <dbReference type="ChEBI" id="CHEBI:57540"/>
    </ligand>
</feature>
<feature type="strand" evidence="10">
    <location>
        <begin position="4"/>
        <end position="11"/>
    </location>
</feature>
<feature type="strand" evidence="10">
    <location>
        <begin position="14"/>
        <end position="20"/>
    </location>
</feature>
<feature type="strand" evidence="10">
    <location>
        <begin position="25"/>
        <end position="27"/>
    </location>
</feature>
<feature type="strand" evidence="10">
    <location>
        <begin position="36"/>
        <end position="44"/>
    </location>
</feature>
<feature type="helix" evidence="10">
    <location>
        <begin position="47"/>
        <end position="53"/>
    </location>
</feature>
<feature type="strand" evidence="10">
    <location>
        <begin position="69"/>
        <end position="76"/>
    </location>
</feature>
<feature type="strand" evidence="10">
    <location>
        <begin position="88"/>
        <end position="90"/>
    </location>
</feature>
<feature type="helix" evidence="10">
    <location>
        <begin position="101"/>
        <end position="104"/>
    </location>
</feature>
<feature type="helix" evidence="10">
    <location>
        <begin position="108"/>
        <end position="110"/>
    </location>
</feature>
<feature type="turn" evidence="10">
    <location>
        <begin position="114"/>
        <end position="116"/>
    </location>
</feature>
<feature type="strand" evidence="10">
    <location>
        <begin position="118"/>
        <end position="121"/>
    </location>
</feature>
<feature type="turn" evidence="10">
    <location>
        <begin position="125"/>
        <end position="128"/>
    </location>
</feature>
<feature type="strand" evidence="10">
    <location>
        <begin position="129"/>
        <end position="131"/>
    </location>
</feature>
<feature type="strand" evidence="10">
    <location>
        <begin position="135"/>
        <end position="144"/>
    </location>
</feature>
<feature type="helix" evidence="10">
    <location>
        <begin position="145"/>
        <end position="148"/>
    </location>
</feature>
<feature type="helix" evidence="10">
    <location>
        <begin position="155"/>
        <end position="160"/>
    </location>
</feature>
<feature type="helix" evidence="10">
    <location>
        <begin position="162"/>
        <end position="165"/>
    </location>
</feature>
<feature type="turn" evidence="10">
    <location>
        <begin position="166"/>
        <end position="170"/>
    </location>
</feature>
<feature type="helix" evidence="10">
    <location>
        <begin position="171"/>
        <end position="181"/>
    </location>
</feature>
<feature type="strand" evidence="10">
    <location>
        <begin position="189"/>
        <end position="193"/>
    </location>
</feature>
<feature type="helix" evidence="10">
    <location>
        <begin position="197"/>
        <end position="209"/>
    </location>
</feature>
<feature type="strand" evidence="10">
    <location>
        <begin position="212"/>
        <end position="219"/>
    </location>
</feature>
<feature type="helix" evidence="10">
    <location>
        <begin position="221"/>
        <end position="228"/>
    </location>
</feature>
<feature type="turn" evidence="10">
    <location>
        <begin position="229"/>
        <end position="231"/>
    </location>
</feature>
<feature type="strand" evidence="10">
    <location>
        <begin position="233"/>
        <end position="236"/>
    </location>
</feature>
<feature type="strand" evidence="10">
    <location>
        <begin position="239"/>
        <end position="241"/>
    </location>
</feature>
<feature type="helix" evidence="10">
    <location>
        <begin position="243"/>
        <end position="251"/>
    </location>
</feature>
<feature type="strand" evidence="10">
    <location>
        <begin position="252"/>
        <end position="254"/>
    </location>
</feature>
<feature type="strand" evidence="10">
    <location>
        <begin position="256"/>
        <end position="261"/>
    </location>
</feature>
<feature type="helix" evidence="10">
    <location>
        <begin position="271"/>
        <end position="273"/>
    </location>
</feature>
<feature type="helix" evidence="10">
    <location>
        <begin position="281"/>
        <end position="289"/>
    </location>
</feature>
<feature type="strand" evidence="10">
    <location>
        <begin position="290"/>
        <end position="297"/>
    </location>
</feature>
<feature type="helix" evidence="10">
    <location>
        <begin position="312"/>
        <end position="315"/>
    </location>
</feature>
<feature type="strand" evidence="10">
    <location>
        <begin position="319"/>
        <end position="321"/>
    </location>
</feature>
<feature type="helix" evidence="10">
    <location>
        <begin position="323"/>
        <end position="328"/>
    </location>
</feature>
<feature type="strand" evidence="10">
    <location>
        <begin position="332"/>
        <end position="334"/>
    </location>
</feature>
<feature type="helix" evidence="10">
    <location>
        <begin position="340"/>
        <end position="342"/>
    </location>
</feature>
<feature type="helix" evidence="10">
    <location>
        <begin position="344"/>
        <end position="352"/>
    </location>
</feature>
<feature type="helix" evidence="10">
    <location>
        <begin position="358"/>
        <end position="363"/>
    </location>
</feature>
<feature type="strand" evidence="10">
    <location>
        <begin position="365"/>
        <end position="368"/>
    </location>
</feature>
<feature type="helix" evidence="10">
    <location>
        <begin position="373"/>
        <end position="381"/>
    </location>
</feature>
<feature type="strand" evidence="10">
    <location>
        <begin position="387"/>
        <end position="390"/>
    </location>
</feature>
<reference evidence="7 8 9" key="1">
    <citation type="journal article" date="1995" name="Biosci. Biotechnol. Biochem.">
        <title>Cloning, sequence analysis, and expression of the gene encoding formaldehyde dismutase from Pseudomonas putida F61.</title>
        <authorList>
            <person name="Yanase H."/>
            <person name="Noda H."/>
            <person name="Aoki K."/>
            <person name="Kita K."/>
            <person name="Kato N."/>
        </authorList>
    </citation>
    <scope>NUCLEOTIDE SEQUENCE [GENOMIC DNA]</scope>
    <scope>PROTEIN SEQUENCE OF 2-21</scope>
    <scope>COFACTOR</scope>
    <source>
        <strain>JCM 9045 / F61</strain>
    </source>
</reference>
<reference evidence="7" key="2">
    <citation type="journal article" date="1986" name="Eur. J. Biochem.">
        <title>Formaldehyde dismutase, a novel NAD-binding oxidoreductase from Pseudomonas putida F61.</title>
        <authorList>
            <person name="Kato N."/>
            <person name="Yamagami T."/>
            <person name="Shimao M."/>
            <person name="Sakazawa C."/>
        </authorList>
    </citation>
    <scope>FUNCTION</scope>
    <scope>CATALYTIC ACTIVITY</scope>
    <scope>COFACTOR</scope>
    <scope>ACTIVITY REGULATION</scope>
    <scope>BIOPHYSICOCHEMICAL PROPERTIES</scope>
    <source>
        <strain>JCM 9045 / F61</strain>
    </source>
</reference>
<reference evidence="7" key="3">
    <citation type="journal article" date="2002" name="Acta Crystallogr. A">
        <title>The X-ray crystal structure of formaldehyde dismutase at 2.3 A resolution.</title>
        <authorList>
            <person name="Hasegawa T."/>
            <person name="Yamano A."/>
            <person name="Miura K."/>
            <person name="Katsube Y."/>
            <person name="Yanase H."/>
            <person name="Kato N."/>
        </authorList>
    </citation>
    <scope>X-RAY CRYSTALLOGRAPHY (2.27 ANGSTROMS) OF 2-399</scope>
    <scope>SUBUNIT</scope>
</reference>
<proteinExistence type="evidence at protein level"/>
<organism>
    <name type="scientific">Pseudomonas putida</name>
    <name type="common">Arthrobacter siderocapsulatus</name>
    <dbReference type="NCBI Taxonomy" id="303"/>
    <lineage>
        <taxon>Bacteria</taxon>
        <taxon>Pseudomonadati</taxon>
        <taxon>Pseudomonadota</taxon>
        <taxon>Gammaproteobacteria</taxon>
        <taxon>Pseudomonadales</taxon>
        <taxon>Pseudomonadaceae</taxon>
        <taxon>Pseudomonas</taxon>
    </lineage>
</organism>
<keyword id="KW-0002">3D-structure</keyword>
<keyword id="KW-0903">Direct protein sequencing</keyword>
<keyword id="KW-0479">Metal-binding</keyword>
<keyword id="KW-0520">NAD</keyword>
<keyword id="KW-0547">Nucleotide-binding</keyword>
<keyword id="KW-0560">Oxidoreductase</keyword>
<keyword id="KW-0862">Zinc</keyword>
<sequence length="399" mass="42981">MAGNKSVVYHGTRDLRVETVPYPKLEHNNRKLEHAVILKVVSTNICGSDQHIYRGRFIVPKGHVLGHEITGEVVEKGSDVELMDIGDLVSVPFNVACGRCRNCKEARSDVCENNLVNPDADLGAFGFDLKGWSGGQAEYVLVPYADYMLLKFGDKEQAMEKIKDLTLISDILPTGFHGCVSAGVKPGSHVYIAGAGPVGRCAAAGARLLGAACVIVGDQNPERLKLLSDAGFETIDLRNSAPLRDQIDQILGKPEVDCGVDAVGFEAHGLGDEANTETPNGALNSLFDVVRAGGAIGIPGIYVGSDPDPVNKDAGSGRLHLDFGKMWTKSIRIMTGMAPVTNYNRHLTEAILWDQMPYLSKVMNIEVITLDQAPDGYAKFDKGSPAKFVIDPHGMLKNK</sequence>
<name>FDM_PSEPU</name>
<evidence type="ECO:0000250" key="1"/>
<evidence type="ECO:0000255" key="2"/>
<evidence type="ECO:0000269" key="3">
    <source>
    </source>
</evidence>
<evidence type="ECO:0000269" key="4">
    <source>
    </source>
</evidence>
<evidence type="ECO:0000269" key="5">
    <source ref="3"/>
</evidence>
<evidence type="ECO:0000303" key="6">
    <source>
    </source>
</evidence>
<evidence type="ECO:0000305" key="7"/>
<evidence type="ECO:0000312" key="8">
    <source>
        <dbReference type="EMBL" id="AAA25818.1"/>
    </source>
</evidence>
<evidence type="ECO:0000312" key="9">
    <source>
        <dbReference type="PIR" id="JC2516"/>
    </source>
</evidence>
<evidence type="ECO:0007829" key="10">
    <source>
        <dbReference type="PDB" id="2DPH"/>
    </source>
</evidence>
<comment type="function">
    <text evidence="3">Active against a range of primary alcohols as well as some secondary alcohols. Exhibits higher activity against alcohols with longer carbon chains.</text>
</comment>
<comment type="catalytic activity">
    <reaction evidence="3">
        <text>2 formaldehyde + H2O = methanol + formate + H(+)</text>
        <dbReference type="Rhea" id="RHEA:19221"/>
        <dbReference type="ChEBI" id="CHEBI:15377"/>
        <dbReference type="ChEBI" id="CHEBI:15378"/>
        <dbReference type="ChEBI" id="CHEBI:15740"/>
        <dbReference type="ChEBI" id="CHEBI:16842"/>
        <dbReference type="ChEBI" id="CHEBI:17790"/>
        <dbReference type="EC" id="1.2.98.1"/>
    </reaction>
</comment>
<comment type="cofactor">
    <cofactor evidence="3 4">
        <name>Zn(2+)</name>
        <dbReference type="ChEBI" id="CHEBI:29105"/>
    </cofactor>
    <text evidence="3 4">Binds 2 Zn(2+) ions per subunit.</text>
</comment>
<comment type="cofactor">
    <cofactor evidence="3 4">
        <name>NAD(+)</name>
        <dbReference type="ChEBI" id="CHEBI:57540"/>
    </cofactor>
    <cofactor evidence="3 4">
        <name>NADH</name>
        <dbReference type="ChEBI" id="CHEBI:57945"/>
    </cofactor>
    <text evidence="3 4">Binds 1 molecule of NAD(+) or NADH per subunit.</text>
</comment>
<comment type="activity regulation">
    <text evidence="3">Inhibited by the substrate analog pyrazole but not by NAD analogs such as AMP, ADP, ATP or N-methylnicotinamide chloride.</text>
</comment>
<comment type="biophysicochemical properties">
    <absorption>
        <max evidence="3">275 nm</max>
        <text evidence="3">Exhibits a small and broad shoulder at 320 nm as the characteristic absorption spectrum of the reduced form of the coenzyme.</text>
    </absorption>
    <kinetics>
        <KM evidence="3">40 mM for ethanol (at 30 degrees Celsius and pH 7.0)</KM>
        <KM evidence="3">20 mM for 1-propanol (at 30 degrees Celsius and pH 7.0)</KM>
        <KM evidence="3">3.2 mM for 1-butanol (at 30 degrees Celsius and pH 7.0)</KM>
        <KM evidence="3">1.4 mM for 1-pentanol (at 30 degrees Celsius and pH 7.0)</KM>
        <KM evidence="3">330 mM for cyclohexanol (at 30 degrees Celsius and pH 7.0)</KM>
        <text>Does not catalyze oxidation of methanol at pH 7.0.</text>
    </kinetics>
</comment>
<comment type="subunit">
    <text evidence="5">Homotetramer.</text>
</comment>
<comment type="similarity">
    <text evidence="2">Belongs to the zinc-containing alcohol dehydrogenase family.</text>
</comment>
<protein>
    <recommendedName>
        <fullName evidence="6">Formaldehyde dismutase</fullName>
        <ecNumber evidence="3">1.2.98.1</ecNumber>
    </recommendedName>
</protein>
<gene>
    <name evidence="8" type="primary">fdm</name>
</gene>
<dbReference type="EC" id="1.2.98.1" evidence="3"/>
<dbReference type="EMBL" id="L25862">
    <property type="protein sequence ID" value="AAA25818.1"/>
    <property type="molecule type" value="Genomic_DNA"/>
</dbReference>
<dbReference type="PIR" id="JC2516">
    <property type="entry name" value="JC2516"/>
</dbReference>
<dbReference type="RefSeq" id="WP_016974636.1">
    <property type="nucleotide sequence ID" value="NZ_MCBJ01000007.1"/>
</dbReference>
<dbReference type="PDB" id="2DPH">
    <property type="method" value="X-ray"/>
    <property type="resolution" value="2.27 A"/>
    <property type="chains" value="A/B=2-399"/>
</dbReference>
<dbReference type="PDBsum" id="2DPH"/>
<dbReference type="SMR" id="Q52078"/>
<dbReference type="KEGG" id="ag:AAA25818"/>
<dbReference type="EvolutionaryTrace" id="Q52078"/>
<dbReference type="GO" id="GO:0047895">
    <property type="term" value="F:formaldehyde dismutase activity"/>
    <property type="evidence" value="ECO:0007669"/>
    <property type="project" value="UniProtKB-EC"/>
</dbReference>
<dbReference type="GO" id="GO:0000166">
    <property type="term" value="F:nucleotide binding"/>
    <property type="evidence" value="ECO:0007669"/>
    <property type="project" value="UniProtKB-KW"/>
</dbReference>
<dbReference type="GO" id="GO:0008270">
    <property type="term" value="F:zinc ion binding"/>
    <property type="evidence" value="ECO:0007669"/>
    <property type="project" value="InterPro"/>
</dbReference>
<dbReference type="CDD" id="cd08282">
    <property type="entry name" value="PFDH_like"/>
    <property type="match status" value="1"/>
</dbReference>
<dbReference type="Gene3D" id="3.90.180.10">
    <property type="entry name" value="Medium-chain alcohol dehydrogenases, catalytic domain"/>
    <property type="match status" value="1"/>
</dbReference>
<dbReference type="Gene3D" id="3.40.50.720">
    <property type="entry name" value="NAD(P)-binding Rossmann-like Domain"/>
    <property type="match status" value="1"/>
</dbReference>
<dbReference type="InterPro" id="IPR013154">
    <property type="entry name" value="ADH-like_N"/>
</dbReference>
<dbReference type="InterPro" id="IPR002328">
    <property type="entry name" value="ADH_Zn_CS"/>
</dbReference>
<dbReference type="InterPro" id="IPR011032">
    <property type="entry name" value="GroES-like_sf"/>
</dbReference>
<dbReference type="InterPro" id="IPR036291">
    <property type="entry name" value="NAD(P)-bd_dom_sf"/>
</dbReference>
<dbReference type="PANTHER" id="PTHR42813:SF3">
    <property type="entry name" value="GLUTATHIONE-INDEPENDENT FORMALDEHYDE DEHYDROGENASE"/>
    <property type="match status" value="1"/>
</dbReference>
<dbReference type="PANTHER" id="PTHR42813">
    <property type="entry name" value="ZINC-TYPE ALCOHOL DEHYDROGENASE-LIKE"/>
    <property type="match status" value="1"/>
</dbReference>
<dbReference type="Pfam" id="PF08240">
    <property type="entry name" value="ADH_N"/>
    <property type="match status" value="1"/>
</dbReference>
<dbReference type="SUPFAM" id="SSF50129">
    <property type="entry name" value="GroES-like"/>
    <property type="match status" value="1"/>
</dbReference>
<dbReference type="SUPFAM" id="SSF51735">
    <property type="entry name" value="NAD(P)-binding Rossmann-fold domains"/>
    <property type="match status" value="1"/>
</dbReference>
<dbReference type="PROSITE" id="PS00059">
    <property type="entry name" value="ADH_ZINC"/>
    <property type="match status" value="1"/>
</dbReference>